<gene>
    <name evidence="1 3" type="primary">murJ</name>
    <name evidence="6" type="synonym">mviN</name>
    <name evidence="6" type="ordered locus">THA_1814</name>
</gene>
<dbReference type="EMBL" id="CP001185">
    <property type="protein sequence ID" value="ACJ76245.1"/>
    <property type="molecule type" value="Genomic_DNA"/>
</dbReference>
<dbReference type="RefSeq" id="WP_012580438.1">
    <property type="nucleotide sequence ID" value="NC_011653.1"/>
</dbReference>
<dbReference type="PDB" id="5T77">
    <property type="method" value="X-ray"/>
    <property type="resolution" value="2.00 A"/>
    <property type="chains" value="A=1-475"/>
</dbReference>
<dbReference type="PDB" id="6NC6">
    <property type="method" value="X-ray"/>
    <property type="resolution" value="3.20 A"/>
    <property type="chains" value="A/B=1-475"/>
</dbReference>
<dbReference type="PDB" id="6NC7">
    <property type="method" value="X-ray"/>
    <property type="resolution" value="3.00 A"/>
    <property type="chains" value="A/B=1-475"/>
</dbReference>
<dbReference type="PDB" id="6NC8">
    <property type="method" value="X-ray"/>
    <property type="resolution" value="2.60 A"/>
    <property type="chains" value="A=1-475"/>
</dbReference>
<dbReference type="PDB" id="6NC9">
    <property type="method" value="X-ray"/>
    <property type="resolution" value="1.80 A"/>
    <property type="chains" value="A=1-475"/>
</dbReference>
<dbReference type="PDBsum" id="5T77"/>
<dbReference type="PDBsum" id="6NC6"/>
<dbReference type="PDBsum" id="6NC7"/>
<dbReference type="PDBsum" id="6NC8"/>
<dbReference type="PDBsum" id="6NC9"/>
<dbReference type="SMR" id="B7IE18"/>
<dbReference type="STRING" id="484019.THA_1814"/>
<dbReference type="TCDB" id="2.A.66.4.8">
    <property type="family name" value="the multidrug/oligosaccharidyl-lipid/polysaccharide (mop) flippase superfamily"/>
</dbReference>
<dbReference type="KEGG" id="taf:THA_1814"/>
<dbReference type="eggNOG" id="COG0728">
    <property type="taxonomic scope" value="Bacteria"/>
</dbReference>
<dbReference type="HOGENOM" id="CLU_006797_5_0_0"/>
<dbReference type="OrthoDB" id="9804143at2"/>
<dbReference type="UniPathway" id="UPA00219"/>
<dbReference type="Proteomes" id="UP000002453">
    <property type="component" value="Chromosome"/>
</dbReference>
<dbReference type="GO" id="GO:0005886">
    <property type="term" value="C:plasma membrane"/>
    <property type="evidence" value="ECO:0007669"/>
    <property type="project" value="UniProtKB-SubCell"/>
</dbReference>
<dbReference type="GO" id="GO:0015648">
    <property type="term" value="F:lipid-linked peptidoglycan transporter activity"/>
    <property type="evidence" value="ECO:0007669"/>
    <property type="project" value="UniProtKB-UniRule"/>
</dbReference>
<dbReference type="GO" id="GO:0071555">
    <property type="term" value="P:cell wall organization"/>
    <property type="evidence" value="ECO:0007669"/>
    <property type="project" value="UniProtKB-KW"/>
</dbReference>
<dbReference type="GO" id="GO:0034204">
    <property type="term" value="P:lipid translocation"/>
    <property type="evidence" value="ECO:0007669"/>
    <property type="project" value="TreeGrafter"/>
</dbReference>
<dbReference type="GO" id="GO:0009252">
    <property type="term" value="P:peptidoglycan biosynthetic process"/>
    <property type="evidence" value="ECO:0007669"/>
    <property type="project" value="UniProtKB-UniRule"/>
</dbReference>
<dbReference type="GO" id="GO:0008360">
    <property type="term" value="P:regulation of cell shape"/>
    <property type="evidence" value="ECO:0007669"/>
    <property type="project" value="UniProtKB-KW"/>
</dbReference>
<dbReference type="CDD" id="cd13123">
    <property type="entry name" value="MATE_MurJ_like"/>
    <property type="match status" value="1"/>
</dbReference>
<dbReference type="HAMAP" id="MF_02078">
    <property type="entry name" value="MurJ_MviN"/>
    <property type="match status" value="1"/>
</dbReference>
<dbReference type="InterPro" id="IPR051050">
    <property type="entry name" value="Lipid_II_flippase_MurJ/MviN"/>
</dbReference>
<dbReference type="InterPro" id="IPR004268">
    <property type="entry name" value="MurJ"/>
</dbReference>
<dbReference type="NCBIfam" id="TIGR01695">
    <property type="entry name" value="murJ_mviN"/>
    <property type="match status" value="1"/>
</dbReference>
<dbReference type="PANTHER" id="PTHR47019">
    <property type="entry name" value="LIPID II FLIPPASE MURJ"/>
    <property type="match status" value="1"/>
</dbReference>
<dbReference type="PANTHER" id="PTHR47019:SF1">
    <property type="entry name" value="LIPID II FLIPPASE MURJ"/>
    <property type="match status" value="1"/>
</dbReference>
<dbReference type="Pfam" id="PF03023">
    <property type="entry name" value="MurJ"/>
    <property type="match status" value="1"/>
</dbReference>
<dbReference type="PIRSF" id="PIRSF002869">
    <property type="entry name" value="MviN"/>
    <property type="match status" value="1"/>
</dbReference>
<dbReference type="PRINTS" id="PR01806">
    <property type="entry name" value="VIRFACTRMVIN"/>
</dbReference>
<sequence length="475" mass="54091">MSILFSSILFSIATFFSRILGLFRDVLFAKYFGVSYELDAYFIAIMFPFFLRKVFGEGAMSSAFVPLYSEKSGEEKDKFLSSVINGFSLIILALVILSYFFPELIINLFGAGSSHETKILAKKLLLITSPSIYFIFLWAISYSILNTNNKFFWPALTPSISNITIIIGTFLSTKYGIISPTIGFLIGSILMFFSIIKSIIKHKYYFTIKHFPHFLKLFFPTFMTMVVSQINTVVDMNVVSFYDKGSISYLQYASRFYLLPYGLFAVSVSTVVLSKISNDRKNFNYHLNDALKTTLFFTIPSMVGLIFLSTPIIRFFYEHGAFTSKDTLITSKILIAYTLGLPFYGIYSTISRSYHAIKNTKTPFIAATIVSLSNIILDIIFGLKYGPIGVALATSIAGIIGVLYLLFSVKTFPIKDFLKISLNSLIMLFVIYLTDFTDNEFWFLIQILIGILVYLIFSSIFYRDLIRRFLYARKK</sequence>
<proteinExistence type="evidence at protein level"/>
<organism>
    <name type="scientific">Thermosipho africanus (strain TCF52B)</name>
    <dbReference type="NCBI Taxonomy" id="484019"/>
    <lineage>
        <taxon>Bacteria</taxon>
        <taxon>Thermotogati</taxon>
        <taxon>Thermotogota</taxon>
        <taxon>Thermotogae</taxon>
        <taxon>Thermotogales</taxon>
        <taxon>Fervidobacteriaceae</taxon>
        <taxon>Thermosipho</taxon>
    </lineage>
</organism>
<name>MURJ_THEAB</name>
<reference key="1">
    <citation type="journal article" date="2009" name="J. Bacteriol.">
        <title>The genome of Thermosipho africanus TCF52B: lateral genetic connections to the Firmicutes and Archaea.</title>
        <authorList>
            <person name="Nesboe C.L."/>
            <person name="Bapteste E."/>
            <person name="Curtis B."/>
            <person name="Dahle H."/>
            <person name="Lopez P."/>
            <person name="Macleod D."/>
            <person name="Dlutek M."/>
            <person name="Bowman S."/>
            <person name="Zhaxybayeva O."/>
            <person name="Birkeland N.-K."/>
            <person name="Doolittle W.F."/>
        </authorList>
    </citation>
    <scope>NUCLEOTIDE SEQUENCE [LARGE SCALE GENOMIC DNA]</scope>
    <source>
        <strain>TCF52B</strain>
    </source>
</reference>
<reference key="2">
    <citation type="journal article" date="2017" name="Nat. Struct. Mol. Biol.">
        <title>Crystal structure of the MOP flippase MurJ in an inward-facing conformation.</title>
        <authorList>
            <person name="Kuk A.C."/>
            <person name="Mashalidis E.H."/>
            <person name="Lee S.Y."/>
        </authorList>
    </citation>
    <scope>X-RAY CRYSTALLOGRAPHY (2.0 ANGSTROMS)</scope>
    <scope>FUNCTION</scope>
    <scope>SUBCELLULAR LOCATION</scope>
    <scope>TOPOLOGY</scope>
    <scope>MUTAGENESIS OF SER-17; ARG-18; ARG-24; ARG-52; GLU-57; ASN-162; GLN-229; ASN-231; ARG-255; PHE-256 AND LEU-259</scope>
    <source>
        <strain>TCF52B</strain>
    </source>
</reference>
<protein>
    <recommendedName>
        <fullName evidence="4">Lipid II flippase MurJ</fullName>
    </recommendedName>
</protein>
<comment type="function">
    <text evidence="1 5">Involved in peptidoglycan biosynthesis. Transports lipid-linked peptidoglycan precursors from the inner to the outer leaflet of the cytoplasmic membrane.</text>
</comment>
<comment type="pathway">
    <text evidence="1">Cell wall biogenesis; peptidoglycan biosynthesis.</text>
</comment>
<comment type="subcellular location">
    <subcellularLocation>
        <location evidence="1 2">Cell inner membrane</location>
        <topology evidence="1 2">Multi-pass membrane protein</topology>
    </subcellularLocation>
</comment>
<comment type="similarity">
    <text evidence="1">Belongs to the MurJ/MviN family.</text>
</comment>
<feature type="chain" id="PRO_0000439057" description="Lipid II flippase MurJ">
    <location>
        <begin position="1"/>
        <end position="475"/>
    </location>
</feature>
<feature type="topological domain" description="Cytoplasmic" evidence="2">
    <location>
        <begin position="1"/>
        <end position="2"/>
    </location>
</feature>
<feature type="transmembrane region" description="Helical" evidence="2">
    <location>
        <begin position="3"/>
        <end position="23"/>
    </location>
</feature>
<feature type="topological domain" description="Periplasmic" evidence="2">
    <location>
        <begin position="24"/>
        <end position="35"/>
    </location>
</feature>
<feature type="transmembrane region" description="Helical" evidence="2">
    <location>
        <begin position="36"/>
        <end position="56"/>
    </location>
</feature>
<feature type="topological domain" description="Cytoplasmic" evidence="2">
    <location>
        <begin position="57"/>
        <end position="78"/>
    </location>
</feature>
<feature type="transmembrane region" description="Helical" evidence="2">
    <location>
        <begin position="79"/>
        <end position="99"/>
    </location>
</feature>
<feature type="topological domain" description="Periplasmic" evidence="2">
    <location>
        <begin position="100"/>
        <end position="123"/>
    </location>
</feature>
<feature type="transmembrane region" description="Helical" evidence="2">
    <location>
        <begin position="124"/>
        <end position="144"/>
    </location>
</feature>
<feature type="topological domain" description="Cytoplasmic" evidence="2">
    <location>
        <begin position="145"/>
        <end position="150"/>
    </location>
</feature>
<feature type="transmembrane region" description="Helical" evidence="2">
    <location>
        <begin position="151"/>
        <end position="171"/>
    </location>
</feature>
<feature type="topological domain" description="Periplasmic" evidence="2">
    <location>
        <begin position="172"/>
        <end position="175"/>
    </location>
</feature>
<feature type="transmembrane region" description="Helical" evidence="2">
    <location>
        <begin position="176"/>
        <end position="196"/>
    </location>
</feature>
<feature type="topological domain" description="Cytoplasmic" evidence="2">
    <location>
        <begin position="197"/>
        <end position="213"/>
    </location>
</feature>
<feature type="transmembrane region" description="Helical" evidence="2">
    <location>
        <begin position="214"/>
        <end position="238"/>
    </location>
</feature>
<feature type="topological domain" description="Periplasmic" evidence="2">
    <location>
        <begin position="239"/>
        <end position="249"/>
    </location>
</feature>
<feature type="transmembrane region" description="Helical" evidence="2">
    <location>
        <begin position="250"/>
        <end position="271"/>
    </location>
</feature>
<feature type="topological domain" description="Cytoplasmic" evidence="2">
    <location>
        <begin position="272"/>
        <end position="287"/>
    </location>
</feature>
<feature type="transmembrane region" description="Helical" evidence="2">
    <location>
        <begin position="288"/>
        <end position="308"/>
    </location>
</feature>
<feature type="topological domain" description="Periplasmic" evidence="2">
    <location>
        <begin position="309"/>
        <end position="332"/>
    </location>
</feature>
<feature type="transmembrane region" description="Helical" evidence="2">
    <location>
        <begin position="333"/>
        <end position="353"/>
    </location>
</feature>
<feature type="topological domain" description="Cytoplasmic" evidence="2">
    <location>
        <begin position="354"/>
        <end position="362"/>
    </location>
</feature>
<feature type="transmembrane region" description="Helical" evidence="2">
    <location>
        <begin position="363"/>
        <end position="383"/>
    </location>
</feature>
<feature type="topological domain" description="Periplasmic" evidence="2">
    <location>
        <begin position="384"/>
        <end position="386"/>
    </location>
</feature>
<feature type="transmembrane region" description="Helical" evidence="2">
    <location>
        <begin position="387"/>
        <end position="407"/>
    </location>
</feature>
<feature type="topological domain" description="Cytoplasmic" evidence="2">
    <location>
        <begin position="408"/>
        <end position="416"/>
    </location>
</feature>
<feature type="transmembrane region" description="Helical" evidence="2">
    <location>
        <begin position="417"/>
        <end position="437"/>
    </location>
</feature>
<feature type="topological domain" description="Periplasmic" evidence="2">
    <location>
        <begin position="438"/>
        <end position="440"/>
    </location>
</feature>
<feature type="transmembrane region" description="Helical" evidence="2">
    <location>
        <begin position="441"/>
        <end position="461"/>
    </location>
</feature>
<feature type="topological domain" description="Cytoplasmic" evidence="2">
    <location>
        <begin position="462"/>
        <end position="475"/>
    </location>
</feature>
<feature type="mutagenesis site" description="Loss of activity." evidence="2">
    <original>S</original>
    <variation>A</variation>
    <location>
        <position position="17"/>
    </location>
</feature>
<feature type="mutagenesis site" description="Loss of activity." evidence="2">
    <original>R</original>
    <variation>A</variation>
    <location>
        <position position="18"/>
    </location>
</feature>
<feature type="mutagenesis site" description="Loss of activity." evidence="2">
    <original>R</original>
    <variation>A</variation>
    <location>
        <position position="24"/>
    </location>
</feature>
<feature type="mutagenesis site" description="Loss of activity." evidence="2">
    <original>R</original>
    <variation>A</variation>
    <location>
        <position position="52"/>
    </location>
</feature>
<feature type="mutagenesis site" description="Loss of activity." evidence="2">
    <original>E</original>
    <variation>A</variation>
    <location>
        <position position="57"/>
    </location>
</feature>
<feature type="mutagenesis site" description="Does not affect activity." evidence="2">
    <original>N</original>
    <variation>A</variation>
    <location>
        <position position="162"/>
    </location>
</feature>
<feature type="mutagenesis site" description="Does not affect activity." evidence="2">
    <original>Q</original>
    <variation>A</variation>
    <location>
        <position position="229"/>
    </location>
</feature>
<feature type="mutagenesis site" description="Does not affect activity." evidence="2">
    <original>N</original>
    <variation>A</variation>
    <location>
        <position position="231"/>
    </location>
</feature>
<feature type="mutagenesis site" description="Loss of activity." evidence="2">
    <original>R</original>
    <variation>A</variation>
    <location>
        <position position="255"/>
    </location>
</feature>
<feature type="mutagenesis site" description="Loss of activity." evidence="2">
    <original>F</original>
    <variation>A</variation>
    <location>
        <position position="256"/>
    </location>
</feature>
<feature type="mutagenesis site" description="Loss of activity." evidence="2">
    <original>L</original>
    <variation>W</variation>
    <location>
        <position position="259"/>
    </location>
</feature>
<feature type="helix" evidence="8">
    <location>
        <begin position="3"/>
        <end position="31"/>
    </location>
</feature>
<feature type="helix" evidence="8">
    <location>
        <begin position="36"/>
        <end position="56"/>
    </location>
</feature>
<feature type="turn" evidence="8">
    <location>
        <begin position="57"/>
        <end position="60"/>
    </location>
</feature>
<feature type="helix" evidence="8">
    <location>
        <begin position="61"/>
        <end position="69"/>
    </location>
</feature>
<feature type="helix" evidence="8">
    <location>
        <begin position="73"/>
        <end position="100"/>
    </location>
</feature>
<feature type="helix" evidence="8">
    <location>
        <begin position="102"/>
        <end position="109"/>
    </location>
</feature>
<feature type="turn" evidence="8">
    <location>
        <begin position="110"/>
        <end position="112"/>
    </location>
</feature>
<feature type="helix" evidence="8">
    <location>
        <begin position="115"/>
        <end position="128"/>
    </location>
</feature>
<feature type="helix" evidence="8">
    <location>
        <begin position="131"/>
        <end position="147"/>
    </location>
</feature>
<feature type="strand" evidence="7">
    <location>
        <begin position="149"/>
        <end position="151"/>
    </location>
</feature>
<feature type="helix" evidence="8">
    <location>
        <begin position="152"/>
        <end position="156"/>
    </location>
</feature>
<feature type="helix" evidence="8">
    <location>
        <begin position="158"/>
        <end position="170"/>
    </location>
</feature>
<feature type="helix" evidence="8">
    <location>
        <begin position="172"/>
        <end position="175"/>
    </location>
</feature>
<feature type="helix" evidence="8">
    <location>
        <begin position="178"/>
        <end position="194"/>
    </location>
</feature>
<feature type="helix" evidence="8">
    <location>
        <begin position="197"/>
        <end position="200"/>
    </location>
</feature>
<feature type="helix" evidence="8">
    <location>
        <begin position="211"/>
        <end position="225"/>
    </location>
</feature>
<feature type="helix" evidence="8">
    <location>
        <begin position="227"/>
        <end position="242"/>
    </location>
</feature>
<feature type="helix" evidence="8">
    <location>
        <begin position="244"/>
        <end position="246"/>
    </location>
</feature>
<feature type="helix" evidence="8">
    <location>
        <begin position="247"/>
        <end position="264"/>
    </location>
</feature>
<feature type="helix" evidence="8">
    <location>
        <begin position="267"/>
        <end position="277"/>
    </location>
</feature>
<feature type="helix" evidence="8">
    <location>
        <begin position="280"/>
        <end position="282"/>
    </location>
</feature>
<feature type="helix" evidence="8">
    <location>
        <begin position="283"/>
        <end position="307"/>
    </location>
</feature>
<feature type="helix" evidence="8">
    <location>
        <begin position="309"/>
        <end position="317"/>
    </location>
</feature>
<feature type="helix" evidence="8">
    <location>
        <begin position="324"/>
        <end position="338"/>
    </location>
</feature>
<feature type="helix" evidence="8">
    <location>
        <begin position="341"/>
        <end position="356"/>
    </location>
</feature>
<feature type="helix" evidence="8">
    <location>
        <begin position="361"/>
        <end position="409"/>
    </location>
</feature>
<feature type="helix" evidence="8">
    <location>
        <begin position="414"/>
        <end position="433"/>
    </location>
</feature>
<feature type="helix" evidence="8">
    <location>
        <begin position="442"/>
        <end position="461"/>
    </location>
</feature>
<feature type="helix" evidence="8">
    <location>
        <begin position="463"/>
        <end position="474"/>
    </location>
</feature>
<evidence type="ECO:0000255" key="1">
    <source>
        <dbReference type="HAMAP-Rule" id="MF_02078"/>
    </source>
</evidence>
<evidence type="ECO:0000269" key="2">
    <source>
    </source>
</evidence>
<evidence type="ECO:0000303" key="3">
    <source>
    </source>
</evidence>
<evidence type="ECO:0000305" key="4"/>
<evidence type="ECO:0000305" key="5">
    <source>
    </source>
</evidence>
<evidence type="ECO:0000312" key="6">
    <source>
        <dbReference type="EMBL" id="ACJ76245.1"/>
    </source>
</evidence>
<evidence type="ECO:0007829" key="7">
    <source>
        <dbReference type="PDB" id="6NC8"/>
    </source>
</evidence>
<evidence type="ECO:0007829" key="8">
    <source>
        <dbReference type="PDB" id="6NC9"/>
    </source>
</evidence>
<keyword id="KW-0002">3D-structure</keyword>
<keyword id="KW-0997">Cell inner membrane</keyword>
<keyword id="KW-1003">Cell membrane</keyword>
<keyword id="KW-0133">Cell shape</keyword>
<keyword id="KW-0961">Cell wall biogenesis/degradation</keyword>
<keyword id="KW-0472">Membrane</keyword>
<keyword id="KW-0573">Peptidoglycan synthesis</keyword>
<keyword id="KW-1185">Reference proteome</keyword>
<keyword id="KW-0812">Transmembrane</keyword>
<keyword id="KW-1133">Transmembrane helix</keyword>
<keyword id="KW-0813">Transport</keyword>
<accession>B7IE18</accession>